<organism>
    <name type="scientific">Variovorax paradoxus (strain S110)</name>
    <dbReference type="NCBI Taxonomy" id="543728"/>
    <lineage>
        <taxon>Bacteria</taxon>
        <taxon>Pseudomonadati</taxon>
        <taxon>Pseudomonadota</taxon>
        <taxon>Betaproteobacteria</taxon>
        <taxon>Burkholderiales</taxon>
        <taxon>Comamonadaceae</taxon>
        <taxon>Variovorax</taxon>
    </lineage>
</organism>
<feature type="chain" id="PRO_1000201803" description="Octanoyltransferase">
    <location>
        <begin position="1"/>
        <end position="226"/>
    </location>
</feature>
<feature type="domain" description="BPL/LPL catalytic" evidence="2">
    <location>
        <begin position="31"/>
        <end position="226"/>
    </location>
</feature>
<feature type="active site" description="Acyl-thioester intermediate" evidence="1">
    <location>
        <position position="190"/>
    </location>
</feature>
<feature type="binding site" evidence="1">
    <location>
        <begin position="70"/>
        <end position="77"/>
    </location>
    <ligand>
        <name>substrate</name>
    </ligand>
</feature>
<feature type="binding site" evidence="1">
    <location>
        <begin position="159"/>
        <end position="161"/>
    </location>
    <ligand>
        <name>substrate</name>
    </ligand>
</feature>
<feature type="binding site" evidence="1">
    <location>
        <begin position="172"/>
        <end position="174"/>
    </location>
    <ligand>
        <name>substrate</name>
    </ligand>
</feature>
<feature type="site" description="Lowers pKa of active site Cys" evidence="1">
    <location>
        <position position="156"/>
    </location>
</feature>
<accession>C5CP20</accession>
<gene>
    <name evidence="1" type="primary">lipB</name>
    <name type="ordered locus">Vapar_4880</name>
</gene>
<proteinExistence type="inferred from homology"/>
<reference key="1">
    <citation type="journal article" date="2011" name="J. Bacteriol.">
        <title>Complete genome sequence of the metabolically versatile plant growth-promoting endophyte, Variovorax paradoxus S110.</title>
        <authorList>
            <person name="Han J.I."/>
            <person name="Choi H.K."/>
            <person name="Lee S.W."/>
            <person name="Orwin P.M."/>
            <person name="Kim J."/>
            <person name="Laroe S.L."/>
            <person name="Kim T.G."/>
            <person name="O'Neil J."/>
            <person name="Leadbetter J.R."/>
            <person name="Lee S.Y."/>
            <person name="Hur C.G."/>
            <person name="Spain J.C."/>
            <person name="Ovchinnikova G."/>
            <person name="Goodwin L."/>
            <person name="Han C."/>
        </authorList>
    </citation>
    <scope>NUCLEOTIDE SEQUENCE [LARGE SCALE GENOMIC DNA]</scope>
    <source>
        <strain>S110</strain>
    </source>
</reference>
<evidence type="ECO:0000255" key="1">
    <source>
        <dbReference type="HAMAP-Rule" id="MF_00013"/>
    </source>
</evidence>
<evidence type="ECO:0000255" key="2">
    <source>
        <dbReference type="PROSITE-ProRule" id="PRU01067"/>
    </source>
</evidence>
<protein>
    <recommendedName>
        <fullName evidence="1">Octanoyltransferase</fullName>
        <ecNumber evidence="1">2.3.1.181</ecNumber>
    </recommendedName>
    <alternativeName>
        <fullName evidence="1">Lipoate-protein ligase B</fullName>
    </alternativeName>
    <alternativeName>
        <fullName evidence="1">Lipoyl/octanoyl transferase</fullName>
    </alternativeName>
    <alternativeName>
        <fullName evidence="1">Octanoyl-[acyl-carrier-protein]-protein N-octanoyltransferase</fullName>
    </alternativeName>
</protein>
<sequence>MSTGIEATWLGAADYAATYGAMKQFTLERLPETPDALWICEHAPVFTQGIAGRQDHILNPGAIPVVQTDRGGQVTFHGPGQVVAYPLIDLRRAGYFVKEYVYRIEESVLRTLAHFGVTGHRVAGAPGIYVRLDDPFSHAALTGPLPAGDPFRGLGKIAALGIKVSRHATYHGVALNVAMDLEPFSRINPCGYAGLQTVDLSTIGVQTTWEEAARVLSQKLGTYLAP</sequence>
<keyword id="KW-0012">Acyltransferase</keyword>
<keyword id="KW-0963">Cytoplasm</keyword>
<keyword id="KW-0808">Transferase</keyword>
<comment type="function">
    <text evidence="1">Catalyzes the transfer of endogenously produced octanoic acid from octanoyl-acyl-carrier-protein onto the lipoyl domains of lipoate-dependent enzymes. Lipoyl-ACP can also act as a substrate although octanoyl-ACP is likely to be the physiological substrate.</text>
</comment>
<comment type="catalytic activity">
    <reaction evidence="1">
        <text>octanoyl-[ACP] + L-lysyl-[protein] = N(6)-octanoyl-L-lysyl-[protein] + holo-[ACP] + H(+)</text>
        <dbReference type="Rhea" id="RHEA:17665"/>
        <dbReference type="Rhea" id="RHEA-COMP:9636"/>
        <dbReference type="Rhea" id="RHEA-COMP:9685"/>
        <dbReference type="Rhea" id="RHEA-COMP:9752"/>
        <dbReference type="Rhea" id="RHEA-COMP:9928"/>
        <dbReference type="ChEBI" id="CHEBI:15378"/>
        <dbReference type="ChEBI" id="CHEBI:29969"/>
        <dbReference type="ChEBI" id="CHEBI:64479"/>
        <dbReference type="ChEBI" id="CHEBI:78463"/>
        <dbReference type="ChEBI" id="CHEBI:78809"/>
        <dbReference type="EC" id="2.3.1.181"/>
    </reaction>
</comment>
<comment type="pathway">
    <text evidence="1">Protein modification; protein lipoylation via endogenous pathway; protein N(6)-(lipoyl)lysine from octanoyl-[acyl-carrier-protein]: step 1/2.</text>
</comment>
<comment type="subcellular location">
    <subcellularLocation>
        <location evidence="1">Cytoplasm</location>
    </subcellularLocation>
</comment>
<comment type="miscellaneous">
    <text evidence="1">In the reaction, the free carboxyl group of octanoic acid is attached via an amide linkage to the epsilon-amino group of a specific lysine residue of lipoyl domains of lipoate-dependent enzymes.</text>
</comment>
<comment type="similarity">
    <text evidence="1">Belongs to the LipB family.</text>
</comment>
<name>LIPB_VARPS</name>
<dbReference type="EC" id="2.3.1.181" evidence="1"/>
<dbReference type="EMBL" id="CP001635">
    <property type="protein sequence ID" value="ACS21484.1"/>
    <property type="molecule type" value="Genomic_DNA"/>
</dbReference>
<dbReference type="SMR" id="C5CP20"/>
<dbReference type="STRING" id="543728.Vapar_4880"/>
<dbReference type="KEGG" id="vap:Vapar_4880"/>
<dbReference type="eggNOG" id="COG0321">
    <property type="taxonomic scope" value="Bacteria"/>
</dbReference>
<dbReference type="HOGENOM" id="CLU_035168_3_1_4"/>
<dbReference type="OrthoDB" id="9787061at2"/>
<dbReference type="UniPathway" id="UPA00538">
    <property type="reaction ID" value="UER00592"/>
</dbReference>
<dbReference type="GO" id="GO:0005737">
    <property type="term" value="C:cytoplasm"/>
    <property type="evidence" value="ECO:0007669"/>
    <property type="project" value="UniProtKB-SubCell"/>
</dbReference>
<dbReference type="GO" id="GO:0033819">
    <property type="term" value="F:lipoyl(octanoyl) transferase activity"/>
    <property type="evidence" value="ECO:0007669"/>
    <property type="project" value="UniProtKB-EC"/>
</dbReference>
<dbReference type="GO" id="GO:0036211">
    <property type="term" value="P:protein modification process"/>
    <property type="evidence" value="ECO:0007669"/>
    <property type="project" value="InterPro"/>
</dbReference>
<dbReference type="CDD" id="cd16444">
    <property type="entry name" value="LipB"/>
    <property type="match status" value="1"/>
</dbReference>
<dbReference type="Gene3D" id="3.30.930.10">
    <property type="entry name" value="Bira Bifunctional Protein, Domain 2"/>
    <property type="match status" value="1"/>
</dbReference>
<dbReference type="HAMAP" id="MF_00013">
    <property type="entry name" value="LipB"/>
    <property type="match status" value="1"/>
</dbReference>
<dbReference type="InterPro" id="IPR045864">
    <property type="entry name" value="aa-tRNA-synth_II/BPL/LPL"/>
</dbReference>
<dbReference type="InterPro" id="IPR004143">
    <property type="entry name" value="BPL_LPL_catalytic"/>
</dbReference>
<dbReference type="InterPro" id="IPR000544">
    <property type="entry name" value="Octanoyltransferase"/>
</dbReference>
<dbReference type="InterPro" id="IPR020605">
    <property type="entry name" value="Octanoyltransferase_CS"/>
</dbReference>
<dbReference type="NCBIfam" id="TIGR00214">
    <property type="entry name" value="lipB"/>
    <property type="match status" value="1"/>
</dbReference>
<dbReference type="NCBIfam" id="NF010922">
    <property type="entry name" value="PRK14342.1"/>
    <property type="match status" value="1"/>
</dbReference>
<dbReference type="PANTHER" id="PTHR10993:SF7">
    <property type="entry name" value="LIPOYLTRANSFERASE 2, MITOCHONDRIAL-RELATED"/>
    <property type="match status" value="1"/>
</dbReference>
<dbReference type="PANTHER" id="PTHR10993">
    <property type="entry name" value="OCTANOYLTRANSFERASE"/>
    <property type="match status" value="1"/>
</dbReference>
<dbReference type="Pfam" id="PF21948">
    <property type="entry name" value="LplA-B_cat"/>
    <property type="match status" value="1"/>
</dbReference>
<dbReference type="PIRSF" id="PIRSF016262">
    <property type="entry name" value="LPLase"/>
    <property type="match status" value="1"/>
</dbReference>
<dbReference type="SUPFAM" id="SSF55681">
    <property type="entry name" value="Class II aaRS and biotin synthetases"/>
    <property type="match status" value="1"/>
</dbReference>
<dbReference type="PROSITE" id="PS51733">
    <property type="entry name" value="BPL_LPL_CATALYTIC"/>
    <property type="match status" value="1"/>
</dbReference>
<dbReference type="PROSITE" id="PS01313">
    <property type="entry name" value="LIPB"/>
    <property type="match status" value="1"/>
</dbReference>